<sequence length="160" mass="17673">MSTLKKPDLSDPKLRAKLAKGMGHNYYGEPAWPNDLLYIFPVVILGTIACVVGLAVLDPAMLGDKANPFATPLEILPEWYLYPVFQILRVVPNKLLGIALQTLIPLGLMILPFIENVNKFSNPFRRPVAMVVFLFGTFLTIYLGIGACLPIDKSLTLGLF</sequence>
<organism>
    <name type="scientific">Prochlorococcus marinus (strain MIT 9515)</name>
    <dbReference type="NCBI Taxonomy" id="167542"/>
    <lineage>
        <taxon>Bacteria</taxon>
        <taxon>Bacillati</taxon>
        <taxon>Cyanobacteriota</taxon>
        <taxon>Cyanophyceae</taxon>
        <taxon>Synechococcales</taxon>
        <taxon>Prochlorococcaceae</taxon>
        <taxon>Prochlorococcus</taxon>
    </lineage>
</organism>
<keyword id="KW-0249">Electron transport</keyword>
<keyword id="KW-0472">Membrane</keyword>
<keyword id="KW-0602">Photosynthesis</keyword>
<keyword id="KW-0793">Thylakoid</keyword>
<keyword id="KW-0812">Transmembrane</keyword>
<keyword id="KW-1133">Transmembrane helix</keyword>
<keyword id="KW-0813">Transport</keyword>
<feature type="chain" id="PRO_1000054900" description="Cytochrome b6-f complex subunit 4">
    <location>
        <begin position="1"/>
        <end position="160"/>
    </location>
</feature>
<feature type="transmembrane region" description="Helical" evidence="1">
    <location>
        <begin position="36"/>
        <end position="56"/>
    </location>
</feature>
<feature type="transmembrane region" description="Helical" evidence="1">
    <location>
        <begin position="95"/>
        <end position="115"/>
    </location>
</feature>
<feature type="transmembrane region" description="Helical" evidence="1">
    <location>
        <begin position="131"/>
        <end position="151"/>
    </location>
</feature>
<name>PETD_PROM5</name>
<gene>
    <name evidence="1" type="primary">petD</name>
    <name type="ordered locus">P9515_03581</name>
</gene>
<reference key="1">
    <citation type="journal article" date="2007" name="PLoS Genet.">
        <title>Patterns and implications of gene gain and loss in the evolution of Prochlorococcus.</title>
        <authorList>
            <person name="Kettler G.C."/>
            <person name="Martiny A.C."/>
            <person name="Huang K."/>
            <person name="Zucker J."/>
            <person name="Coleman M.L."/>
            <person name="Rodrigue S."/>
            <person name="Chen F."/>
            <person name="Lapidus A."/>
            <person name="Ferriera S."/>
            <person name="Johnson J."/>
            <person name="Steglich C."/>
            <person name="Church G.M."/>
            <person name="Richardson P."/>
            <person name="Chisholm S.W."/>
        </authorList>
    </citation>
    <scope>NUCLEOTIDE SEQUENCE [LARGE SCALE GENOMIC DNA]</scope>
    <source>
        <strain>MIT 9515</strain>
    </source>
</reference>
<evidence type="ECO:0000255" key="1">
    <source>
        <dbReference type="HAMAP-Rule" id="MF_01344"/>
    </source>
</evidence>
<protein>
    <recommendedName>
        <fullName evidence="1">Cytochrome b6-f complex subunit 4</fullName>
    </recommendedName>
    <alternativeName>
        <fullName evidence="1">17 kDa polypeptide</fullName>
    </alternativeName>
</protein>
<accession>A2BUV6</accession>
<proteinExistence type="inferred from homology"/>
<comment type="function">
    <text evidence="1">Component of the cytochrome b6-f complex, which mediates electron transfer between photosystem II (PSII) and photosystem I (PSI), cyclic electron flow around PSI, and state transitions.</text>
</comment>
<comment type="subunit">
    <text evidence="1">The 4 large subunits of the cytochrome b6-f complex are cytochrome b6, subunit IV (17 kDa polypeptide, PetD), cytochrome f and the Rieske protein, while the 4 small subunits are PetG, PetL, PetM and PetN. The complex functions as a dimer.</text>
</comment>
<comment type="subcellular location">
    <subcellularLocation>
        <location evidence="1">Cellular thylakoid membrane</location>
        <topology evidence="1">Multi-pass membrane protein</topology>
    </subcellularLocation>
</comment>
<comment type="similarity">
    <text evidence="1">Belongs to the cytochrome b family. PetD subfamily.</text>
</comment>
<dbReference type="EMBL" id="CP000552">
    <property type="protein sequence ID" value="ABM71567.1"/>
    <property type="molecule type" value="Genomic_DNA"/>
</dbReference>
<dbReference type="RefSeq" id="WP_011819675.1">
    <property type="nucleotide sequence ID" value="NC_008817.1"/>
</dbReference>
<dbReference type="SMR" id="A2BUV6"/>
<dbReference type="STRING" id="167542.P9515_03581"/>
<dbReference type="GeneID" id="60200374"/>
<dbReference type="KEGG" id="pmc:P9515_03581"/>
<dbReference type="eggNOG" id="COG1290">
    <property type="taxonomic scope" value="Bacteria"/>
</dbReference>
<dbReference type="HOGENOM" id="CLU_112652_0_0_3"/>
<dbReference type="OrthoDB" id="529454at2"/>
<dbReference type="Proteomes" id="UP000001589">
    <property type="component" value="Chromosome"/>
</dbReference>
<dbReference type="GO" id="GO:0031676">
    <property type="term" value="C:plasma membrane-derived thylakoid membrane"/>
    <property type="evidence" value="ECO:0007669"/>
    <property type="project" value="UniProtKB-SubCell"/>
</dbReference>
<dbReference type="GO" id="GO:0045158">
    <property type="term" value="F:electron transporter, transferring electrons within cytochrome b6/f complex of photosystem II activity"/>
    <property type="evidence" value="ECO:0007669"/>
    <property type="project" value="UniProtKB-UniRule"/>
</dbReference>
<dbReference type="GO" id="GO:0045156">
    <property type="term" value="F:electron transporter, transferring electrons within the cyclic electron transport pathway of photosynthesis activity"/>
    <property type="evidence" value="ECO:0007669"/>
    <property type="project" value="InterPro"/>
</dbReference>
<dbReference type="GO" id="GO:0008121">
    <property type="term" value="F:ubiquinol-cytochrome-c reductase activity"/>
    <property type="evidence" value="ECO:0007669"/>
    <property type="project" value="TreeGrafter"/>
</dbReference>
<dbReference type="GO" id="GO:0009767">
    <property type="term" value="P:photosynthetic electron transport chain"/>
    <property type="evidence" value="ECO:0007669"/>
    <property type="project" value="InterPro"/>
</dbReference>
<dbReference type="CDD" id="cd00290">
    <property type="entry name" value="cytochrome_b_C"/>
    <property type="match status" value="1"/>
</dbReference>
<dbReference type="FunFam" id="1.10.287.980:FF:000001">
    <property type="entry name" value="Cytochrome b6-f complex subunit 4"/>
    <property type="match status" value="1"/>
</dbReference>
<dbReference type="FunFam" id="1.20.5.510:FF:000002">
    <property type="entry name" value="Cytochrome b6-f complex subunit 4"/>
    <property type="match status" value="1"/>
</dbReference>
<dbReference type="Gene3D" id="1.10.287.980">
    <property type="entry name" value="plastocyanin oxidoreductase"/>
    <property type="match status" value="1"/>
</dbReference>
<dbReference type="Gene3D" id="1.20.5.510">
    <property type="entry name" value="Single helix bin"/>
    <property type="match status" value="1"/>
</dbReference>
<dbReference type="HAMAP" id="MF_01344">
    <property type="entry name" value="Cytb6_f_subIV"/>
    <property type="match status" value="1"/>
</dbReference>
<dbReference type="InterPro" id="IPR005798">
    <property type="entry name" value="Cyt_b/b6_C"/>
</dbReference>
<dbReference type="InterPro" id="IPR036150">
    <property type="entry name" value="Cyt_b/b6_C_sf"/>
</dbReference>
<dbReference type="InterPro" id="IPR005870">
    <property type="entry name" value="Cyt_b6/f_cplx_suIV"/>
</dbReference>
<dbReference type="InterPro" id="IPR048260">
    <property type="entry name" value="Cytochrome_b_C_euk/bac"/>
</dbReference>
<dbReference type="NCBIfam" id="TIGR01156">
    <property type="entry name" value="cytb6_f_IV"/>
    <property type="match status" value="1"/>
</dbReference>
<dbReference type="PANTHER" id="PTHR19271">
    <property type="entry name" value="CYTOCHROME B"/>
    <property type="match status" value="1"/>
</dbReference>
<dbReference type="PANTHER" id="PTHR19271:SF41">
    <property type="entry name" value="CYTOCHROME B_B6 C-TERMINAL REGION PROFILE DOMAIN-CONTAINING PROTEIN"/>
    <property type="match status" value="1"/>
</dbReference>
<dbReference type="Pfam" id="PF00032">
    <property type="entry name" value="Cytochrom_B_C"/>
    <property type="match status" value="1"/>
</dbReference>
<dbReference type="PIRSF" id="PIRSF000033">
    <property type="entry name" value="B6f_17K"/>
    <property type="match status" value="1"/>
</dbReference>
<dbReference type="SUPFAM" id="SSF81648">
    <property type="entry name" value="a domain/subunit of cytochrome bc1 complex (Ubiquinol-cytochrome c reductase)"/>
    <property type="match status" value="1"/>
</dbReference>
<dbReference type="PROSITE" id="PS51003">
    <property type="entry name" value="CYTB_CTER"/>
    <property type="match status" value="1"/>
</dbReference>